<comment type="function">
    <text evidence="1">Phosphorolytic 3'-5' exoribonuclease that plays an important role in tRNA 3'-end maturation. Removes nucleotide residues following the 3'-CCA terminus of tRNAs; can also add nucleotides to the ends of RNA molecules by using nucleoside diphosphates as substrates, but this may not be physiologically important. Probably plays a role in initiation of 16S rRNA degradation (leading to ribosome degradation) during starvation.</text>
</comment>
<comment type="catalytic activity">
    <reaction evidence="1">
        <text>tRNA(n+1) + phosphate = tRNA(n) + a ribonucleoside 5'-diphosphate</text>
        <dbReference type="Rhea" id="RHEA:10628"/>
        <dbReference type="Rhea" id="RHEA-COMP:17343"/>
        <dbReference type="Rhea" id="RHEA-COMP:17344"/>
        <dbReference type="ChEBI" id="CHEBI:43474"/>
        <dbReference type="ChEBI" id="CHEBI:57930"/>
        <dbReference type="ChEBI" id="CHEBI:173114"/>
        <dbReference type="EC" id="2.7.7.56"/>
    </reaction>
</comment>
<comment type="subunit">
    <text evidence="1">Homohexameric ring arranged as a trimer of dimers.</text>
</comment>
<comment type="similarity">
    <text evidence="1">Belongs to the RNase PH family.</text>
</comment>
<proteinExistence type="inferred from homology"/>
<sequence>MRPSKRAPEELRKVTLERGVARYAEGSCLVTFGETRVLCTASLEERGPSWLRGSGKGWITAEYAMLPRATHERNRREVNAGKPSGRTQEIQRLIGRSLRAVVNLPAIGERQIVIDCDVLQADGGTRTASITGAWVALHECFTWMRSRSIISVDPMRDHVAAVSCGIHKGTPILDLDYAEDSAAETDANFVITGSGGIVEVQGTAEVTPFSEEEFLGLLRLAKSGVAQLVALQKQAVG</sequence>
<protein>
    <recommendedName>
        <fullName evidence="1">Ribonuclease PH</fullName>
        <shortName evidence="1">RNase PH</shortName>
        <ecNumber evidence="1">2.7.7.56</ecNumber>
    </recommendedName>
    <alternativeName>
        <fullName evidence="1">tRNA nucleotidyltransferase</fullName>
    </alternativeName>
</protein>
<accession>B8IFR7</accession>
<feature type="chain" id="PRO_1000146780" description="Ribonuclease PH">
    <location>
        <begin position="1"/>
        <end position="237"/>
    </location>
</feature>
<feature type="binding site" evidence="1">
    <location>
        <position position="86"/>
    </location>
    <ligand>
        <name>phosphate</name>
        <dbReference type="ChEBI" id="CHEBI:43474"/>
        <note>substrate</note>
    </ligand>
</feature>
<feature type="binding site" evidence="1">
    <location>
        <begin position="124"/>
        <end position="126"/>
    </location>
    <ligand>
        <name>phosphate</name>
        <dbReference type="ChEBI" id="CHEBI:43474"/>
        <note>substrate</note>
    </ligand>
</feature>
<organism>
    <name type="scientific">Methylobacterium nodulans (strain LMG 21967 / CNCM I-2342 / ORS 2060)</name>
    <dbReference type="NCBI Taxonomy" id="460265"/>
    <lineage>
        <taxon>Bacteria</taxon>
        <taxon>Pseudomonadati</taxon>
        <taxon>Pseudomonadota</taxon>
        <taxon>Alphaproteobacteria</taxon>
        <taxon>Hyphomicrobiales</taxon>
        <taxon>Methylobacteriaceae</taxon>
        <taxon>Methylobacterium</taxon>
    </lineage>
</organism>
<reference key="1">
    <citation type="submission" date="2009-01" db="EMBL/GenBank/DDBJ databases">
        <title>Complete sequence of chromosome of Methylobacterium nodulans ORS 2060.</title>
        <authorList>
            <consortium name="US DOE Joint Genome Institute"/>
            <person name="Lucas S."/>
            <person name="Copeland A."/>
            <person name="Lapidus A."/>
            <person name="Glavina del Rio T."/>
            <person name="Dalin E."/>
            <person name="Tice H."/>
            <person name="Bruce D."/>
            <person name="Goodwin L."/>
            <person name="Pitluck S."/>
            <person name="Sims D."/>
            <person name="Brettin T."/>
            <person name="Detter J.C."/>
            <person name="Han C."/>
            <person name="Larimer F."/>
            <person name="Land M."/>
            <person name="Hauser L."/>
            <person name="Kyrpides N."/>
            <person name="Ivanova N."/>
            <person name="Marx C.J."/>
            <person name="Richardson P."/>
        </authorList>
    </citation>
    <scope>NUCLEOTIDE SEQUENCE [LARGE SCALE GENOMIC DNA]</scope>
    <source>
        <strain>LMG 21967 / CNCM I-2342 / ORS 2060</strain>
    </source>
</reference>
<evidence type="ECO:0000255" key="1">
    <source>
        <dbReference type="HAMAP-Rule" id="MF_00564"/>
    </source>
</evidence>
<dbReference type="EC" id="2.7.7.56" evidence="1"/>
<dbReference type="EMBL" id="CP001349">
    <property type="protein sequence ID" value="ACL59627.1"/>
    <property type="molecule type" value="Genomic_DNA"/>
</dbReference>
<dbReference type="RefSeq" id="WP_015931261.1">
    <property type="nucleotide sequence ID" value="NC_011894.1"/>
</dbReference>
<dbReference type="SMR" id="B8IFR7"/>
<dbReference type="STRING" id="460265.Mnod_4763"/>
<dbReference type="KEGG" id="mno:Mnod_4763"/>
<dbReference type="eggNOG" id="COG0689">
    <property type="taxonomic scope" value="Bacteria"/>
</dbReference>
<dbReference type="HOGENOM" id="CLU_050858_0_0_5"/>
<dbReference type="OrthoDB" id="9802265at2"/>
<dbReference type="Proteomes" id="UP000008207">
    <property type="component" value="Chromosome"/>
</dbReference>
<dbReference type="GO" id="GO:0000175">
    <property type="term" value="F:3'-5'-RNA exonuclease activity"/>
    <property type="evidence" value="ECO:0007669"/>
    <property type="project" value="UniProtKB-UniRule"/>
</dbReference>
<dbReference type="GO" id="GO:0000049">
    <property type="term" value="F:tRNA binding"/>
    <property type="evidence" value="ECO:0007669"/>
    <property type="project" value="UniProtKB-UniRule"/>
</dbReference>
<dbReference type="GO" id="GO:0009022">
    <property type="term" value="F:tRNA nucleotidyltransferase activity"/>
    <property type="evidence" value="ECO:0007669"/>
    <property type="project" value="UniProtKB-UniRule"/>
</dbReference>
<dbReference type="GO" id="GO:0016075">
    <property type="term" value="P:rRNA catabolic process"/>
    <property type="evidence" value="ECO:0007669"/>
    <property type="project" value="UniProtKB-UniRule"/>
</dbReference>
<dbReference type="GO" id="GO:0006364">
    <property type="term" value="P:rRNA processing"/>
    <property type="evidence" value="ECO:0007669"/>
    <property type="project" value="UniProtKB-KW"/>
</dbReference>
<dbReference type="GO" id="GO:0008033">
    <property type="term" value="P:tRNA processing"/>
    <property type="evidence" value="ECO:0007669"/>
    <property type="project" value="UniProtKB-UniRule"/>
</dbReference>
<dbReference type="CDD" id="cd11362">
    <property type="entry name" value="RNase_PH_bact"/>
    <property type="match status" value="1"/>
</dbReference>
<dbReference type="FunFam" id="3.30.230.70:FF:000003">
    <property type="entry name" value="Ribonuclease PH"/>
    <property type="match status" value="1"/>
</dbReference>
<dbReference type="Gene3D" id="3.30.230.70">
    <property type="entry name" value="GHMP Kinase, N-terminal domain"/>
    <property type="match status" value="1"/>
</dbReference>
<dbReference type="HAMAP" id="MF_00564">
    <property type="entry name" value="RNase_PH"/>
    <property type="match status" value="1"/>
</dbReference>
<dbReference type="InterPro" id="IPR001247">
    <property type="entry name" value="ExoRNase_PH_dom1"/>
</dbReference>
<dbReference type="InterPro" id="IPR015847">
    <property type="entry name" value="ExoRNase_PH_dom2"/>
</dbReference>
<dbReference type="InterPro" id="IPR036345">
    <property type="entry name" value="ExoRNase_PH_dom2_sf"/>
</dbReference>
<dbReference type="InterPro" id="IPR027408">
    <property type="entry name" value="PNPase/RNase_PH_dom_sf"/>
</dbReference>
<dbReference type="InterPro" id="IPR020568">
    <property type="entry name" value="Ribosomal_Su5_D2-typ_SF"/>
</dbReference>
<dbReference type="InterPro" id="IPR050080">
    <property type="entry name" value="RNase_PH"/>
</dbReference>
<dbReference type="InterPro" id="IPR002381">
    <property type="entry name" value="RNase_PH_bac-type"/>
</dbReference>
<dbReference type="InterPro" id="IPR018336">
    <property type="entry name" value="RNase_PH_CS"/>
</dbReference>
<dbReference type="NCBIfam" id="TIGR01966">
    <property type="entry name" value="RNasePH"/>
    <property type="match status" value="1"/>
</dbReference>
<dbReference type="PANTHER" id="PTHR11953">
    <property type="entry name" value="EXOSOME COMPLEX COMPONENT"/>
    <property type="match status" value="1"/>
</dbReference>
<dbReference type="PANTHER" id="PTHR11953:SF0">
    <property type="entry name" value="EXOSOME COMPLEX COMPONENT RRP41"/>
    <property type="match status" value="1"/>
</dbReference>
<dbReference type="Pfam" id="PF01138">
    <property type="entry name" value="RNase_PH"/>
    <property type="match status" value="1"/>
</dbReference>
<dbReference type="Pfam" id="PF03725">
    <property type="entry name" value="RNase_PH_C"/>
    <property type="match status" value="1"/>
</dbReference>
<dbReference type="SUPFAM" id="SSF55666">
    <property type="entry name" value="Ribonuclease PH domain 2-like"/>
    <property type="match status" value="1"/>
</dbReference>
<dbReference type="SUPFAM" id="SSF54211">
    <property type="entry name" value="Ribosomal protein S5 domain 2-like"/>
    <property type="match status" value="1"/>
</dbReference>
<dbReference type="PROSITE" id="PS01277">
    <property type="entry name" value="RIBONUCLEASE_PH"/>
    <property type="match status" value="1"/>
</dbReference>
<name>RNPH_METNO</name>
<gene>
    <name evidence="1" type="primary">rph</name>
    <name type="ordered locus">Mnod_4763</name>
</gene>
<keyword id="KW-0548">Nucleotidyltransferase</keyword>
<keyword id="KW-1185">Reference proteome</keyword>
<keyword id="KW-0694">RNA-binding</keyword>
<keyword id="KW-0698">rRNA processing</keyword>
<keyword id="KW-0808">Transferase</keyword>
<keyword id="KW-0819">tRNA processing</keyword>
<keyword id="KW-0820">tRNA-binding</keyword>